<keyword id="KW-0025">Alternative splicing</keyword>
<keyword id="KW-0217">Developmental protein</keyword>
<keyword id="KW-0539">Nucleus</keyword>
<keyword id="KW-0597">Phosphoprotein</keyword>
<keyword id="KW-1185">Reference proteome</keyword>
<keyword id="KW-0804">Transcription</keyword>
<keyword id="KW-0805">Transcription regulation</keyword>
<comment type="function">
    <text evidence="7">SIII, also known as elongin, is a general transcription elongation factor that increases the RNA polymerase II transcription elongation past template-encoded arresting sites. Subunit A is transcriptionally active and its transcription activity is strongly enhanced by binding to the dimeric complex of the SIII regulatory subunits B and C (elongin BC complex). May play an important role in metamorphosis.</text>
</comment>
<comment type="subcellular location">
    <subcellularLocation>
        <location evidence="3">Nucleus</location>
    </subcellularLocation>
</comment>
<comment type="alternative products">
    <event type="alternative splicing"/>
    <isoform>
        <id>Q9VCP0-1</id>
        <name evidence="9">A</name>
        <sequence type="displayed"/>
    </isoform>
    <isoform>
        <id>Q9VCP0-2</id>
        <name evidence="9">B</name>
        <sequence type="described" ref="VSP_050782"/>
    </isoform>
</comment>
<comment type="developmental stage">
    <text evidence="7">Expression at low levels during embryonic expression and peaks during mid larval stages.</text>
</comment>
<comment type="domain">
    <text evidence="2">The elongin BC complex binding domain is also known as BC-box with the consensus [APST]-L-x(3)-C-x(3)-[AILV].</text>
</comment>
<evidence type="ECO:0000250" key="1"/>
<evidence type="ECO:0000250" key="2">
    <source>
        <dbReference type="UniProtKB" id="Q63187"/>
    </source>
</evidence>
<evidence type="ECO:0000255" key="3">
    <source>
        <dbReference type="PROSITE-ProRule" id="PRU00649"/>
    </source>
</evidence>
<evidence type="ECO:0000256" key="4">
    <source>
        <dbReference type="SAM" id="MobiDB-lite"/>
    </source>
</evidence>
<evidence type="ECO:0000269" key="5">
    <source>
    </source>
</evidence>
<evidence type="ECO:0000269" key="6">
    <source>
    </source>
</evidence>
<evidence type="ECO:0000269" key="7">
    <source>
    </source>
</evidence>
<evidence type="ECO:0000269" key="8">
    <source>
    </source>
</evidence>
<evidence type="ECO:0000303" key="9">
    <source>
    </source>
</evidence>
<evidence type="ECO:0000303" key="10">
    <source>
    </source>
</evidence>
<evidence type="ECO:0000305" key="11"/>
<evidence type="ECO:0000312" key="12">
    <source>
        <dbReference type="EMBL" id="AAF56117.1"/>
    </source>
</evidence>
<evidence type="ECO:0000312" key="13">
    <source>
        <dbReference type="EMBL" id="AAL28911.1"/>
    </source>
</evidence>
<evidence type="ECO:0000312" key="14">
    <source>
        <dbReference type="EMBL" id="AAO41456.1"/>
    </source>
</evidence>
<proteinExistence type="evidence at protein level"/>
<feature type="chain" id="PRO_0000086959" description="Transcription elongation factor B polypeptide 3">
    <location>
        <begin position="1"/>
        <end position="643"/>
    </location>
</feature>
<feature type="domain" description="TFIIS N-terminal" evidence="3">
    <location>
        <begin position="9"/>
        <end position="82"/>
    </location>
</feature>
<feature type="region of interest" description="Disordered" evidence="4">
    <location>
        <begin position="86"/>
        <end position="289"/>
    </location>
</feature>
<feature type="region of interest" description="Disordered" evidence="4">
    <location>
        <begin position="302"/>
        <end position="351"/>
    </location>
</feature>
<feature type="region of interest" description="Activation domain" evidence="1">
    <location>
        <begin position="413"/>
        <end position="571"/>
    </location>
</feature>
<feature type="region of interest" description="Interacting with Elongin BC complex" evidence="1">
    <location>
        <begin position="439"/>
        <end position="448"/>
    </location>
</feature>
<feature type="compositionally biased region" description="Basic and acidic residues" evidence="4">
    <location>
        <begin position="94"/>
        <end position="106"/>
    </location>
</feature>
<feature type="compositionally biased region" description="Polar residues" evidence="4">
    <location>
        <begin position="114"/>
        <end position="124"/>
    </location>
</feature>
<feature type="compositionally biased region" description="Basic residues" evidence="4">
    <location>
        <begin position="127"/>
        <end position="136"/>
    </location>
</feature>
<feature type="compositionally biased region" description="Basic and acidic residues" evidence="4">
    <location>
        <begin position="164"/>
        <end position="198"/>
    </location>
</feature>
<feature type="compositionally biased region" description="Basic and acidic residues" evidence="4">
    <location>
        <begin position="207"/>
        <end position="237"/>
    </location>
</feature>
<feature type="compositionally biased region" description="Basic residues" evidence="4">
    <location>
        <begin position="238"/>
        <end position="255"/>
    </location>
</feature>
<feature type="compositionally biased region" description="Low complexity" evidence="4">
    <location>
        <begin position="302"/>
        <end position="336"/>
    </location>
</feature>
<feature type="modified residue" description="Phosphoserine" evidence="8">
    <location>
        <position position="120"/>
    </location>
</feature>
<feature type="splice variant" id="VSP_050782" description="In isoform B." evidence="9 10">
    <location>
        <begin position="1"/>
        <end position="77"/>
    </location>
</feature>
<feature type="sequence conflict" description="In Ref. 4; AAO41456." evidence="11" ref="4">
    <original>N</original>
    <variation>D</variation>
    <location>
        <position position="485"/>
    </location>
</feature>
<dbReference type="EMBL" id="AE014297">
    <property type="protein sequence ID" value="AAF56117.1"/>
    <property type="molecule type" value="Genomic_DNA"/>
</dbReference>
<dbReference type="EMBL" id="AE014297">
    <property type="protein sequence ID" value="AAN13934.1"/>
    <property type="molecule type" value="Genomic_DNA"/>
</dbReference>
<dbReference type="EMBL" id="AY061363">
    <property type="protein sequence ID" value="AAL28911.1"/>
    <property type="molecule type" value="mRNA"/>
</dbReference>
<dbReference type="EMBL" id="BT003775">
    <property type="protein sequence ID" value="AAO41456.1"/>
    <property type="molecule type" value="mRNA"/>
</dbReference>
<dbReference type="RefSeq" id="NP_651135.1">
    <molecule id="Q9VCP0-2"/>
    <property type="nucleotide sequence ID" value="NM_142878.4"/>
</dbReference>
<dbReference type="RefSeq" id="NP_732846.1">
    <molecule id="Q9VCP0-1"/>
    <property type="nucleotide sequence ID" value="NM_170061.3"/>
</dbReference>
<dbReference type="SMR" id="Q9VCP0"/>
<dbReference type="BioGRID" id="67692">
    <property type="interactions" value="15"/>
</dbReference>
<dbReference type="ComplexPortal" id="CPX-2444">
    <property type="entry name" value="Elongin transcription elongation complex"/>
</dbReference>
<dbReference type="FunCoup" id="Q9VCP0">
    <property type="interactions" value="2197"/>
</dbReference>
<dbReference type="IntAct" id="Q9VCP0">
    <property type="interactions" value="5"/>
</dbReference>
<dbReference type="STRING" id="7227.FBpp0083766"/>
<dbReference type="iPTMnet" id="Q9VCP0"/>
<dbReference type="PaxDb" id="7227-FBpp0083766"/>
<dbReference type="DNASU" id="42749"/>
<dbReference type="EnsemblMetazoa" id="FBtr0084374">
    <molecule id="Q9VCP0-1"/>
    <property type="protein sequence ID" value="FBpp0083766"/>
    <property type="gene ID" value="FBgn0039066"/>
</dbReference>
<dbReference type="EnsemblMetazoa" id="FBtr0084375">
    <molecule id="Q9VCP0-2"/>
    <property type="protein sequence ID" value="FBpp0083767"/>
    <property type="gene ID" value="FBgn0039066"/>
</dbReference>
<dbReference type="GeneID" id="42749"/>
<dbReference type="KEGG" id="dme:Dmel_CG6755"/>
<dbReference type="AGR" id="FB:FBgn0039066"/>
<dbReference type="CTD" id="6924"/>
<dbReference type="FlyBase" id="FBgn0039066">
    <property type="gene designation" value="EloA"/>
</dbReference>
<dbReference type="VEuPathDB" id="VectorBase:FBgn0039066"/>
<dbReference type="eggNOG" id="KOG2821">
    <property type="taxonomic scope" value="Eukaryota"/>
</dbReference>
<dbReference type="GeneTree" id="ENSGT00390000002428"/>
<dbReference type="HOGENOM" id="CLU_021679_1_0_1"/>
<dbReference type="InParanoid" id="Q9VCP0"/>
<dbReference type="OMA" id="IESKHDY"/>
<dbReference type="OrthoDB" id="21513at2759"/>
<dbReference type="PhylomeDB" id="Q9VCP0"/>
<dbReference type="Reactome" id="R-DME-112382">
    <property type="pathway name" value="Formation of RNA Pol II elongation complex"/>
</dbReference>
<dbReference type="Reactome" id="R-DME-674695">
    <property type="pathway name" value="RNA Polymerase II Pre-transcription Events"/>
</dbReference>
<dbReference type="Reactome" id="R-DME-6796648">
    <property type="pathway name" value="TP53 Regulates Transcription of DNA Repair Genes"/>
</dbReference>
<dbReference type="Reactome" id="R-DME-75955">
    <property type="pathway name" value="RNA Polymerase II Transcription Elongation"/>
</dbReference>
<dbReference type="BioGRID-ORCS" id="42749">
    <property type="hits" value="0 hits in 3 CRISPR screens"/>
</dbReference>
<dbReference type="GenomeRNAi" id="42749"/>
<dbReference type="PRO" id="PR:Q9VCP0"/>
<dbReference type="Proteomes" id="UP000000803">
    <property type="component" value="Chromosome 3R"/>
</dbReference>
<dbReference type="Bgee" id="FBgn0039066">
    <property type="expression patterns" value="Expressed in cleaving embryo and 171 other cell types or tissues"/>
</dbReference>
<dbReference type="ExpressionAtlas" id="Q9VCP0">
    <property type="expression patterns" value="baseline and differential"/>
</dbReference>
<dbReference type="GO" id="GO:0070449">
    <property type="term" value="C:elongin complex"/>
    <property type="evidence" value="ECO:0000314"/>
    <property type="project" value="FlyBase"/>
</dbReference>
<dbReference type="GO" id="GO:0005634">
    <property type="term" value="C:nucleus"/>
    <property type="evidence" value="ECO:0000314"/>
    <property type="project" value="FlyBase"/>
</dbReference>
<dbReference type="GO" id="GO:0008023">
    <property type="term" value="C:transcription elongation factor complex"/>
    <property type="evidence" value="ECO:0000250"/>
    <property type="project" value="UniProtKB"/>
</dbReference>
<dbReference type="GO" id="GO:0007474">
    <property type="term" value="P:imaginal disc-derived wing vein specification"/>
    <property type="evidence" value="ECO:0000315"/>
    <property type="project" value="FlyBase"/>
</dbReference>
<dbReference type="GO" id="GO:0006368">
    <property type="term" value="P:transcription elongation by RNA polymerase II"/>
    <property type="evidence" value="ECO:0000314"/>
    <property type="project" value="FlyBase"/>
</dbReference>
<dbReference type="FunFam" id="1.20.930.10:FF:000024">
    <property type="entry name" value="GM26494"/>
    <property type="match status" value="1"/>
</dbReference>
<dbReference type="Gene3D" id="6.10.250.3180">
    <property type="match status" value="1"/>
</dbReference>
<dbReference type="Gene3D" id="1.20.930.10">
    <property type="entry name" value="Conserved domain common to transcription factors TFIIS, elongin A, CRSP70"/>
    <property type="match status" value="1"/>
</dbReference>
<dbReference type="InterPro" id="IPR051870">
    <property type="entry name" value="Elongin-A_domain"/>
</dbReference>
<dbReference type="InterPro" id="IPR010684">
    <property type="entry name" value="RNA_pol_II_trans_fac_SIII_A"/>
</dbReference>
<dbReference type="InterPro" id="IPR003617">
    <property type="entry name" value="TFIIS/CRSP70_N_sub"/>
</dbReference>
<dbReference type="InterPro" id="IPR035441">
    <property type="entry name" value="TFIIS/LEDGF_dom_sf"/>
</dbReference>
<dbReference type="InterPro" id="IPR017923">
    <property type="entry name" value="TFIIS_N"/>
</dbReference>
<dbReference type="PANTHER" id="PTHR15141">
    <property type="entry name" value="TRANSCRIPTION ELONGATION FACTOR B POLYPEPTIDE 3"/>
    <property type="match status" value="1"/>
</dbReference>
<dbReference type="PANTHER" id="PTHR15141:SF76">
    <property type="entry name" value="TRANSCRIPTION ELONGATION FACTOR B POLYPEPTIDE 3"/>
    <property type="match status" value="1"/>
</dbReference>
<dbReference type="Pfam" id="PF06881">
    <property type="entry name" value="Elongin_A"/>
    <property type="match status" value="1"/>
</dbReference>
<dbReference type="Pfam" id="PF08711">
    <property type="entry name" value="Med26"/>
    <property type="match status" value="1"/>
</dbReference>
<dbReference type="SMART" id="SM00509">
    <property type="entry name" value="TFS2N"/>
    <property type="match status" value="1"/>
</dbReference>
<dbReference type="SUPFAM" id="SSF47676">
    <property type="entry name" value="Conserved domain common to transcription factors TFIIS, elongin A, CRSP70"/>
    <property type="match status" value="1"/>
</dbReference>
<dbReference type="PROSITE" id="PS51319">
    <property type="entry name" value="TFIIS_N"/>
    <property type="match status" value="1"/>
</dbReference>
<sequence length="643" mass="71162">MASTSNLLDVVRHYQRSIEKHGEDEQRLLHCITKLFNLPIKFEHLQETGIGKTVNALRKISGEVGVAAKTLVTKWKAMVAKEDPSIASTPTAIHNEEDSGKTKSSDEDPDQENKGGNSSSGEDLNTSKHKSKHAKSTKHERSSSSRSHSKSRSDSDKKHKSSRHDKSKDRDKDREGQKEAKEHKEKKSNGEHKSKDSSKSSSSHKSSKSESHKSEHTKSKHEKDKTSHSELKEVKDKSSKHKSSSSKSSKRSHSPPRHEEESQKAKIPKVKSKSEEDSADGFDSSMGANFDDVLGLLNIPISSKKSSSNSKSKFVAKPTAAPSSSALSAPTTAGSSKEALSTSSRPTSKKPELLASTAKLEPLDPNIALELPTISNNYKPMPLNQTVMDVVFNQGGSHKAQASRYFNESEALAQGISSKTMRTKIYSGVRTGQILQVPSLFDLCTRVLQKNIDALEYTGGVPFEVLRPVLERATPQQLLNFEEYNPYLMDDSDVLWQQHVQRHCRSQRREEMETWREMFLRCQEEKDRKLSILAESIKASQKISEAPVRKTQLAFVDSMVKPPRSVQRKQEQYGTKGKLIATPAARVAALSSVTPNAAKVGDARLRVLAAARDTAQVGAGPARSKKAPLMAKTLQFMRGRLKR</sequence>
<organism>
    <name type="scientific">Drosophila melanogaster</name>
    <name type="common">Fruit fly</name>
    <dbReference type="NCBI Taxonomy" id="7227"/>
    <lineage>
        <taxon>Eukaryota</taxon>
        <taxon>Metazoa</taxon>
        <taxon>Ecdysozoa</taxon>
        <taxon>Arthropoda</taxon>
        <taxon>Hexapoda</taxon>
        <taxon>Insecta</taxon>
        <taxon>Pterygota</taxon>
        <taxon>Neoptera</taxon>
        <taxon>Endopterygota</taxon>
        <taxon>Diptera</taxon>
        <taxon>Brachycera</taxon>
        <taxon>Muscomorpha</taxon>
        <taxon>Ephydroidea</taxon>
        <taxon>Drosophilidae</taxon>
        <taxon>Drosophila</taxon>
        <taxon>Sophophora</taxon>
    </lineage>
</organism>
<accession>Q9VCP0</accession>
<accession>Q86NR0</accession>
<accession>Q95RH9</accession>
<name>ELOA1_DROME</name>
<gene>
    <name type="primary">EloA</name>
    <name type="ORF">CG6755</name>
</gene>
<reference evidence="12" key="1">
    <citation type="journal article" date="2000" name="Science">
        <title>The genome sequence of Drosophila melanogaster.</title>
        <authorList>
            <person name="Adams M.D."/>
            <person name="Celniker S.E."/>
            <person name="Holt R.A."/>
            <person name="Evans C.A."/>
            <person name="Gocayne J.D."/>
            <person name="Amanatides P.G."/>
            <person name="Scherer S.E."/>
            <person name="Li P.W."/>
            <person name="Hoskins R.A."/>
            <person name="Galle R.F."/>
            <person name="George R.A."/>
            <person name="Lewis S.E."/>
            <person name="Richards S."/>
            <person name="Ashburner M."/>
            <person name="Henderson S.N."/>
            <person name="Sutton G.G."/>
            <person name="Wortman J.R."/>
            <person name="Yandell M.D."/>
            <person name="Zhang Q."/>
            <person name="Chen L.X."/>
            <person name="Brandon R.C."/>
            <person name="Rogers Y.-H.C."/>
            <person name="Blazej R.G."/>
            <person name="Champe M."/>
            <person name="Pfeiffer B.D."/>
            <person name="Wan K.H."/>
            <person name="Doyle C."/>
            <person name="Baxter E.G."/>
            <person name="Helt G."/>
            <person name="Nelson C.R."/>
            <person name="Miklos G.L.G."/>
            <person name="Abril J.F."/>
            <person name="Agbayani A."/>
            <person name="An H.-J."/>
            <person name="Andrews-Pfannkoch C."/>
            <person name="Baldwin D."/>
            <person name="Ballew R.M."/>
            <person name="Basu A."/>
            <person name="Baxendale J."/>
            <person name="Bayraktaroglu L."/>
            <person name="Beasley E.M."/>
            <person name="Beeson K.Y."/>
            <person name="Benos P.V."/>
            <person name="Berman B.P."/>
            <person name="Bhandari D."/>
            <person name="Bolshakov S."/>
            <person name="Borkova D."/>
            <person name="Botchan M.R."/>
            <person name="Bouck J."/>
            <person name="Brokstein P."/>
            <person name="Brottier P."/>
            <person name="Burtis K.C."/>
            <person name="Busam D.A."/>
            <person name="Butler H."/>
            <person name="Cadieu E."/>
            <person name="Center A."/>
            <person name="Chandra I."/>
            <person name="Cherry J.M."/>
            <person name="Cawley S."/>
            <person name="Dahlke C."/>
            <person name="Davenport L.B."/>
            <person name="Davies P."/>
            <person name="de Pablos B."/>
            <person name="Delcher A."/>
            <person name="Deng Z."/>
            <person name="Mays A.D."/>
            <person name="Dew I."/>
            <person name="Dietz S.M."/>
            <person name="Dodson K."/>
            <person name="Doup L.E."/>
            <person name="Downes M."/>
            <person name="Dugan-Rocha S."/>
            <person name="Dunkov B.C."/>
            <person name="Dunn P."/>
            <person name="Durbin K.J."/>
            <person name="Evangelista C.C."/>
            <person name="Ferraz C."/>
            <person name="Ferriera S."/>
            <person name="Fleischmann W."/>
            <person name="Fosler C."/>
            <person name="Gabrielian A.E."/>
            <person name="Garg N.S."/>
            <person name="Gelbart W.M."/>
            <person name="Glasser K."/>
            <person name="Glodek A."/>
            <person name="Gong F."/>
            <person name="Gorrell J.H."/>
            <person name="Gu Z."/>
            <person name="Guan P."/>
            <person name="Harris M."/>
            <person name="Harris N.L."/>
            <person name="Harvey D.A."/>
            <person name="Heiman T.J."/>
            <person name="Hernandez J.R."/>
            <person name="Houck J."/>
            <person name="Hostin D."/>
            <person name="Houston K.A."/>
            <person name="Howland T.J."/>
            <person name="Wei M.-H."/>
            <person name="Ibegwam C."/>
            <person name="Jalali M."/>
            <person name="Kalush F."/>
            <person name="Karpen G.H."/>
            <person name="Ke Z."/>
            <person name="Kennison J.A."/>
            <person name="Ketchum K.A."/>
            <person name="Kimmel B.E."/>
            <person name="Kodira C.D."/>
            <person name="Kraft C.L."/>
            <person name="Kravitz S."/>
            <person name="Kulp D."/>
            <person name="Lai Z."/>
            <person name="Lasko P."/>
            <person name="Lei Y."/>
            <person name="Levitsky A.A."/>
            <person name="Li J.H."/>
            <person name="Li Z."/>
            <person name="Liang Y."/>
            <person name="Lin X."/>
            <person name="Liu X."/>
            <person name="Mattei B."/>
            <person name="McIntosh T.C."/>
            <person name="McLeod M.P."/>
            <person name="McPherson D."/>
            <person name="Merkulov G."/>
            <person name="Milshina N.V."/>
            <person name="Mobarry C."/>
            <person name="Morris J."/>
            <person name="Moshrefi A."/>
            <person name="Mount S.M."/>
            <person name="Moy M."/>
            <person name="Murphy B."/>
            <person name="Murphy L."/>
            <person name="Muzny D.M."/>
            <person name="Nelson D.L."/>
            <person name="Nelson D.R."/>
            <person name="Nelson K.A."/>
            <person name="Nixon K."/>
            <person name="Nusskern D.R."/>
            <person name="Pacleb J.M."/>
            <person name="Palazzolo M."/>
            <person name="Pittman G.S."/>
            <person name="Pan S."/>
            <person name="Pollard J."/>
            <person name="Puri V."/>
            <person name="Reese M.G."/>
            <person name="Reinert K."/>
            <person name="Remington K."/>
            <person name="Saunders R.D.C."/>
            <person name="Scheeler F."/>
            <person name="Shen H."/>
            <person name="Shue B.C."/>
            <person name="Siden-Kiamos I."/>
            <person name="Simpson M."/>
            <person name="Skupski M.P."/>
            <person name="Smith T.J."/>
            <person name="Spier E."/>
            <person name="Spradling A.C."/>
            <person name="Stapleton M."/>
            <person name="Strong R."/>
            <person name="Sun E."/>
            <person name="Svirskas R."/>
            <person name="Tector C."/>
            <person name="Turner R."/>
            <person name="Venter E."/>
            <person name="Wang A.H."/>
            <person name="Wang X."/>
            <person name="Wang Z.-Y."/>
            <person name="Wassarman D.A."/>
            <person name="Weinstock G.M."/>
            <person name="Weissenbach J."/>
            <person name="Williams S.M."/>
            <person name="Woodage T."/>
            <person name="Worley K.C."/>
            <person name="Wu D."/>
            <person name="Yang S."/>
            <person name="Yao Q.A."/>
            <person name="Ye J."/>
            <person name="Yeh R.-F."/>
            <person name="Zaveri J.S."/>
            <person name="Zhan M."/>
            <person name="Zhang G."/>
            <person name="Zhao Q."/>
            <person name="Zheng L."/>
            <person name="Zheng X.H."/>
            <person name="Zhong F.N."/>
            <person name="Zhong W."/>
            <person name="Zhou X."/>
            <person name="Zhu S.C."/>
            <person name="Zhu X."/>
            <person name="Smith H.O."/>
            <person name="Gibbs R.A."/>
            <person name="Myers E.W."/>
            <person name="Rubin G.M."/>
            <person name="Venter J.C."/>
        </authorList>
    </citation>
    <scope>NUCLEOTIDE SEQUENCE [LARGE SCALE GENOMIC DNA]</scope>
    <source>
        <strain evidence="5">Berkeley</strain>
    </source>
</reference>
<reference evidence="11 12" key="2">
    <citation type="journal article" date="2002" name="Genome Biol.">
        <title>Annotation of the Drosophila melanogaster euchromatic genome: a systematic review.</title>
        <authorList>
            <person name="Misra S."/>
            <person name="Crosby M.A."/>
            <person name="Mungall C.J."/>
            <person name="Matthews B.B."/>
            <person name="Campbell K.S."/>
            <person name="Hradecky P."/>
            <person name="Huang Y."/>
            <person name="Kaminker J.S."/>
            <person name="Millburn G.H."/>
            <person name="Prochnik S.E."/>
            <person name="Smith C.D."/>
            <person name="Tupy J.L."/>
            <person name="Whitfield E.J."/>
            <person name="Bayraktaroglu L."/>
            <person name="Berman B.P."/>
            <person name="Bettencourt B.R."/>
            <person name="Celniker S.E."/>
            <person name="de Grey A.D.N.J."/>
            <person name="Drysdale R.A."/>
            <person name="Harris N.L."/>
            <person name="Richter J."/>
            <person name="Russo S."/>
            <person name="Schroeder A.J."/>
            <person name="Shu S.Q."/>
            <person name="Stapleton M."/>
            <person name="Yamada C."/>
            <person name="Ashburner M."/>
            <person name="Gelbart W.M."/>
            <person name="Rubin G.M."/>
            <person name="Lewis S.E."/>
        </authorList>
    </citation>
    <scope>GENOME REANNOTATION</scope>
    <scope>ALTERNATIVE SPLICING</scope>
    <source>
        <strain>Berkeley</strain>
    </source>
</reference>
<reference evidence="11 13" key="3">
    <citation type="journal article" date="2002" name="Genome Biol.">
        <title>A Drosophila full-length cDNA resource.</title>
        <authorList>
            <person name="Stapleton M."/>
            <person name="Carlson J.W."/>
            <person name="Brokstein P."/>
            <person name="Yu C."/>
            <person name="Champe M."/>
            <person name="George R.A."/>
            <person name="Guarin H."/>
            <person name="Kronmiller B."/>
            <person name="Pacleb J.M."/>
            <person name="Park S."/>
            <person name="Wan K.H."/>
            <person name="Rubin G.M."/>
            <person name="Celniker S.E."/>
        </authorList>
    </citation>
    <scope>NUCLEOTIDE SEQUENCE [LARGE SCALE MRNA] (ISOFORM B)</scope>
    <source>
        <strain evidence="13">Berkeley</strain>
        <tissue evidence="6">Embryo</tissue>
    </source>
</reference>
<reference evidence="11 14" key="4">
    <citation type="submission" date="2003-02" db="EMBL/GenBank/DDBJ databases">
        <authorList>
            <person name="Stapleton M."/>
            <person name="Brokstein P."/>
            <person name="Hong L."/>
            <person name="Agbayani A."/>
            <person name="Carlson J.W."/>
            <person name="Champe M."/>
            <person name="Chavez C."/>
            <person name="Dorsett V."/>
            <person name="Dresnek D."/>
            <person name="Farfan D."/>
            <person name="Frise E."/>
            <person name="George R.A."/>
            <person name="Gonzalez M."/>
            <person name="Guarin H."/>
            <person name="Kronmiller B."/>
            <person name="Li P.W."/>
            <person name="Liao G."/>
            <person name="Miranda A."/>
            <person name="Mungall C.J."/>
            <person name="Nunoo J."/>
            <person name="Pacleb J.M."/>
            <person name="Paragas V."/>
            <person name="Park S."/>
            <person name="Patel S."/>
            <person name="Phouanenavong S."/>
            <person name="Wan K.H."/>
            <person name="Yu C."/>
            <person name="Lewis S.E."/>
            <person name="Rubin G.M."/>
            <person name="Celniker S.E."/>
        </authorList>
    </citation>
    <scope>NUCLEOTIDE SEQUENCE [LARGE SCALE MRNA] (ISOFORM A)</scope>
    <source>
        <strain evidence="14">Berkeley</strain>
        <tissue>Embryo</tissue>
    </source>
</reference>
<reference key="5">
    <citation type="journal article" date="2004" name="Mol. Cell. Biol.">
        <title>In vivo requirement of the RNA polymerase II elongation factor elongin A for proper gene expression and development.</title>
        <authorList>
            <person name="Gerber M."/>
            <person name="Eissenberg J.C."/>
            <person name="Kong S."/>
            <person name="Tenney K."/>
            <person name="Conaway J.W."/>
            <person name="Conaway R.C."/>
            <person name="Shilatifard A."/>
        </authorList>
    </citation>
    <scope>FUNCTION</scope>
    <scope>DEVELOPMENTAL STAGE</scope>
</reference>
<reference key="6">
    <citation type="journal article" date="2008" name="J. Proteome Res.">
        <title>Phosphoproteome analysis of Drosophila melanogaster embryos.</title>
        <authorList>
            <person name="Zhai B."/>
            <person name="Villen J."/>
            <person name="Beausoleil S.A."/>
            <person name="Mintseris J."/>
            <person name="Gygi S.P."/>
        </authorList>
    </citation>
    <scope>PHOSPHORYLATION [LARGE SCALE ANALYSIS] AT SER-120</scope>
    <scope>IDENTIFICATION BY MASS SPECTROMETRY</scope>
    <source>
        <tissue>Embryo</tissue>
    </source>
</reference>
<protein>
    <recommendedName>
        <fullName>Transcription elongation factor B polypeptide 3</fullName>
    </recommendedName>
    <alternativeName>
        <fullName>Elongin-A</fullName>
    </alternativeName>
    <alternativeName>
        <fullName>RNA polymerase II transcription factor SIII subunit A</fullName>
    </alternativeName>
    <alternativeName>
        <fullName>dEloA</fullName>
    </alternativeName>
</protein>